<comment type="function">
    <text evidence="1">Shows a cell wall hydrolytic DL-endopeptidase activity.</text>
</comment>
<comment type="subcellular location">
    <subcellularLocation>
        <location evidence="1">Secreted</location>
    </subcellularLocation>
</comment>
<comment type="similarity">
    <text evidence="3 5">Belongs to the peptidase C40 family.</text>
</comment>
<feature type="signal peptide" evidence="2">
    <location>
        <begin position="1"/>
        <end position="30"/>
    </location>
</feature>
<feature type="chain" id="PRO_0000223367" description="Peptidoglycan DL-endopeptidase CwlO">
    <location>
        <begin position="31"/>
        <end position="452"/>
    </location>
</feature>
<feature type="domain" description="NlpC/P60" evidence="3">
    <location>
        <begin position="321"/>
        <end position="450"/>
    </location>
</feature>
<feature type="region of interest" description="Disordered" evidence="4">
    <location>
        <begin position="28"/>
        <end position="53"/>
    </location>
</feature>
<feature type="region of interest" description="Disordered" evidence="4">
    <location>
        <begin position="258"/>
        <end position="317"/>
    </location>
</feature>
<feature type="compositionally biased region" description="Polar residues" evidence="4">
    <location>
        <begin position="28"/>
        <end position="38"/>
    </location>
</feature>
<feature type="compositionally biased region" description="Basic and acidic residues" evidence="4">
    <location>
        <begin position="39"/>
        <end position="53"/>
    </location>
</feature>
<feature type="compositionally biased region" description="Basic and acidic residues" evidence="4">
    <location>
        <begin position="263"/>
        <end position="275"/>
    </location>
</feature>
<feature type="compositionally biased region" description="Low complexity" evidence="4">
    <location>
        <begin position="276"/>
        <end position="317"/>
    </location>
</feature>
<feature type="active site" description="Nucleophile" evidence="3">
    <location>
        <position position="358"/>
    </location>
</feature>
<feature type="active site" description="Proton acceptor" evidence="3">
    <location>
        <position position="410"/>
    </location>
</feature>
<feature type="active site" evidence="3">
    <location>
        <position position="422"/>
    </location>
</feature>
<dbReference type="EC" id="3.4.-.-"/>
<dbReference type="EMBL" id="AE017333">
    <property type="protein sequence ID" value="AAU39305.1"/>
    <property type="molecule type" value="Genomic_DNA"/>
</dbReference>
<dbReference type="EMBL" id="CP000002">
    <property type="protein sequence ID" value="AAU21952.1"/>
    <property type="molecule type" value="Genomic_DNA"/>
</dbReference>
<dbReference type="RefSeq" id="WP_003178705.1">
    <property type="nucleotide sequence ID" value="NC_006322.1"/>
</dbReference>
<dbReference type="SMR" id="Q65NQ9"/>
<dbReference type="STRING" id="279010.BL01691"/>
<dbReference type="MEROPS" id="C40.010"/>
<dbReference type="KEGG" id="bld:BLi00347"/>
<dbReference type="KEGG" id="bli:BL01691"/>
<dbReference type="eggNOG" id="COG0791">
    <property type="taxonomic scope" value="Bacteria"/>
</dbReference>
<dbReference type="eggNOG" id="COG3883">
    <property type="taxonomic scope" value="Bacteria"/>
</dbReference>
<dbReference type="HOGENOM" id="CLU_034085_0_1_9"/>
<dbReference type="Proteomes" id="UP000000606">
    <property type="component" value="Chromosome"/>
</dbReference>
<dbReference type="GO" id="GO:0005576">
    <property type="term" value="C:extracellular region"/>
    <property type="evidence" value="ECO:0007669"/>
    <property type="project" value="UniProtKB-SubCell"/>
</dbReference>
<dbReference type="GO" id="GO:0008234">
    <property type="term" value="F:cysteine-type peptidase activity"/>
    <property type="evidence" value="ECO:0007669"/>
    <property type="project" value="UniProtKB-KW"/>
</dbReference>
<dbReference type="GO" id="GO:0071555">
    <property type="term" value="P:cell wall organization"/>
    <property type="evidence" value="ECO:0007669"/>
    <property type="project" value="UniProtKB-KW"/>
</dbReference>
<dbReference type="GO" id="GO:0006508">
    <property type="term" value="P:proteolysis"/>
    <property type="evidence" value="ECO:0007669"/>
    <property type="project" value="UniProtKB-KW"/>
</dbReference>
<dbReference type="Gene3D" id="6.10.250.3150">
    <property type="match status" value="1"/>
</dbReference>
<dbReference type="Gene3D" id="3.90.1720.10">
    <property type="entry name" value="endopeptidase domain like (from Nostoc punctiforme)"/>
    <property type="match status" value="1"/>
</dbReference>
<dbReference type="InterPro" id="IPR000064">
    <property type="entry name" value="NLP_P60_dom"/>
</dbReference>
<dbReference type="InterPro" id="IPR038765">
    <property type="entry name" value="Papain-like_cys_pep_sf"/>
</dbReference>
<dbReference type="InterPro" id="IPR051202">
    <property type="entry name" value="Peptidase_C40"/>
</dbReference>
<dbReference type="PANTHER" id="PTHR47053">
    <property type="entry name" value="MUREIN DD-ENDOPEPTIDASE MEPH-RELATED"/>
    <property type="match status" value="1"/>
</dbReference>
<dbReference type="PANTHER" id="PTHR47053:SF1">
    <property type="entry name" value="MUREIN DD-ENDOPEPTIDASE MEPH-RELATED"/>
    <property type="match status" value="1"/>
</dbReference>
<dbReference type="Pfam" id="PF24568">
    <property type="entry name" value="CC_PcsB"/>
    <property type="match status" value="1"/>
</dbReference>
<dbReference type="Pfam" id="PF00877">
    <property type="entry name" value="NLPC_P60"/>
    <property type="match status" value="1"/>
</dbReference>
<dbReference type="SUPFAM" id="SSF54001">
    <property type="entry name" value="Cysteine proteinases"/>
    <property type="match status" value="1"/>
</dbReference>
<dbReference type="PROSITE" id="PS51935">
    <property type="entry name" value="NLPC_P60"/>
    <property type="match status" value="1"/>
</dbReference>
<reference key="1">
    <citation type="journal article" date="2004" name="J. Mol. Microbiol. Biotechnol.">
        <title>The complete genome sequence of Bacillus licheniformis DSM13, an organism with great industrial potential.</title>
        <authorList>
            <person name="Veith B."/>
            <person name="Herzberg C."/>
            <person name="Steckel S."/>
            <person name="Feesche J."/>
            <person name="Maurer K.H."/>
            <person name="Ehrenreich P."/>
            <person name="Baeumer S."/>
            <person name="Henne A."/>
            <person name="Liesegang H."/>
            <person name="Merkl R."/>
            <person name="Ehrenreich A."/>
            <person name="Gottschalk G."/>
        </authorList>
    </citation>
    <scope>NUCLEOTIDE SEQUENCE [LARGE SCALE GENOMIC DNA]</scope>
    <source>
        <strain>ATCC 14580 / DSM 13 / JCM 2505 / CCUG 7422 / NBRC 12200 / NCIMB 9375 / NCTC 10341 / NRRL NRS-1264 / Gibson 46</strain>
    </source>
</reference>
<reference key="2">
    <citation type="journal article" date="2004" name="Genome Biol.">
        <title>Complete genome sequence of the industrial bacterium Bacillus licheniformis and comparisons with closely related Bacillus species.</title>
        <authorList>
            <person name="Rey M.W."/>
            <person name="Ramaiya P."/>
            <person name="Nelson B.A."/>
            <person name="Brody-Karpin S.D."/>
            <person name="Zaretsky E.J."/>
            <person name="Tang M."/>
            <person name="Lopez de Leon A."/>
            <person name="Xiang H."/>
            <person name="Gusti V."/>
            <person name="Clausen I.G."/>
            <person name="Olsen P.B."/>
            <person name="Rasmussen M.D."/>
            <person name="Andersen J.T."/>
            <person name="Joergensen P.L."/>
            <person name="Larsen T.S."/>
            <person name="Sorokin A."/>
            <person name="Bolotin A."/>
            <person name="Lapidus A."/>
            <person name="Galleron N."/>
            <person name="Ehrlich S.D."/>
            <person name="Berka R.M."/>
        </authorList>
    </citation>
    <scope>NUCLEOTIDE SEQUENCE [LARGE SCALE GENOMIC DNA]</scope>
    <source>
        <strain>ATCC 14580 / DSM 13 / JCM 2505 / CCUG 7422 / NBRC 12200 / NCIMB 9375 / NCTC 10341 / NRRL NRS-1264 / Gibson 46</strain>
    </source>
</reference>
<accession>Q65NQ9</accession>
<accession>Q62Z56</accession>
<proteinExistence type="inferred from homology"/>
<organism>
    <name type="scientific">Bacillus licheniformis (strain ATCC 14580 / DSM 13 / JCM 2505 / CCUG 7422 / NBRC 12200 / NCIMB 9375 / NCTC 10341 / NRRL NRS-1264 / Gibson 46)</name>
    <dbReference type="NCBI Taxonomy" id="279010"/>
    <lineage>
        <taxon>Bacteria</taxon>
        <taxon>Bacillati</taxon>
        <taxon>Bacillota</taxon>
        <taxon>Bacilli</taxon>
        <taxon>Bacillales</taxon>
        <taxon>Bacillaceae</taxon>
        <taxon>Bacillus</taxon>
    </lineage>
</organism>
<protein>
    <recommendedName>
        <fullName>Peptidoglycan DL-endopeptidase CwlO</fullName>
        <ecNumber>3.4.-.-</ecNumber>
    </recommendedName>
    <alternativeName>
        <fullName>D-gamma-glutamyl-meso-diaminopimelyl DL-endopeptidase</fullName>
    </alternativeName>
</protein>
<evidence type="ECO:0000250" key="1"/>
<evidence type="ECO:0000255" key="2"/>
<evidence type="ECO:0000255" key="3">
    <source>
        <dbReference type="PROSITE-ProRule" id="PRU01284"/>
    </source>
</evidence>
<evidence type="ECO:0000256" key="4">
    <source>
        <dbReference type="SAM" id="MobiDB-lite"/>
    </source>
</evidence>
<evidence type="ECO:0000305" key="5"/>
<name>CWLO_BACLD</name>
<gene>
    <name type="primary">cwlO</name>
    <name type="ordered locus">BLi00347</name>
    <name type="ordered locus">BL01691</name>
</gene>
<keyword id="KW-0961">Cell wall biogenesis/degradation</keyword>
<keyword id="KW-0378">Hydrolase</keyword>
<keyword id="KW-0645">Protease</keyword>
<keyword id="KW-1185">Reference proteome</keyword>
<keyword id="KW-0964">Secreted</keyword>
<keyword id="KW-0732">Signal</keyword>
<keyword id="KW-0788">Thiol protease</keyword>
<sequence>MKKKVYTFGLASILGTASLFTPFMNNTASAETSQQKQEIQQKRSEVNSGIESKRKEIAKLQDEQKKLEGKIQELDKKALETSNKIEDKEKENKKTKKEVEALKKEIKETEKRIEERSKVIKNRVRSLQENGGSQNYLNVLLGAQSFGDFITRATAVSTIVDADKDLLDEQEKDKNKLEKAMSDLNTKLDEIQKTLADLKTLKSDLDKQLKEQANLSKQLQTKQAAAESELSDLKKEAGSLTKEEAALEQKLKEERAAAAAAAKAKEESATAEKSDSGSSSSSNSGSVSKSDGSSNSGSSSSKKSSSPSRNYSSGSVVSSNGNAIEAAISTGSSIVGRSPYKWGGGRSQADIDNRRFDCSSFVRWAYASAGVELGFGATTSTLVGKGRAVSASEMKRGDLVFFDTYKTNGHVGIYLGNGTFLNDNSSRGVSVDSMSNPYWKKAFNGVVRRVVE</sequence>